<gene>
    <name evidence="1" type="primary">arnA</name>
    <name type="ordered locus">Psyr_2691</name>
</gene>
<accession>Q4ZSZ2</accession>
<proteinExistence type="inferred from homology"/>
<feature type="chain" id="PRO_0000083105" description="Bifunctional polymyxin resistance protein ArnA">
    <location>
        <begin position="1"/>
        <end position="664"/>
    </location>
</feature>
<feature type="region of interest" description="Formyltransferase ArnAFT">
    <location>
        <begin position="1"/>
        <end position="308"/>
    </location>
</feature>
<feature type="region of interest" description="Dehydrogenase ArnADH">
    <location>
        <begin position="318"/>
        <end position="664"/>
    </location>
</feature>
<feature type="active site" description="Proton donor; for formyltransferase activity" evidence="1">
    <location>
        <position position="106"/>
    </location>
</feature>
<feature type="active site" description="Proton acceptor; for decarboxylase activity" evidence="1">
    <location>
        <position position="438"/>
    </location>
</feature>
<feature type="active site" description="Proton donor; for decarboxylase activity" evidence="1">
    <location>
        <position position="622"/>
    </location>
</feature>
<feature type="binding site" evidence="1">
    <location>
        <position position="116"/>
    </location>
    <ligand>
        <name>(6R)-10-formyltetrahydrofolate</name>
        <dbReference type="ChEBI" id="CHEBI:195366"/>
    </ligand>
</feature>
<feature type="binding site" evidence="1">
    <location>
        <begin position="138"/>
        <end position="142"/>
    </location>
    <ligand>
        <name>(6R)-10-formyltetrahydrofolate</name>
        <dbReference type="ChEBI" id="CHEBI:195366"/>
    </ligand>
</feature>
<feature type="binding site" evidence="1">
    <location>
        <position position="351"/>
    </location>
    <ligand>
        <name>NAD(+)</name>
        <dbReference type="ChEBI" id="CHEBI:57540"/>
    </ligand>
</feature>
<feature type="binding site" evidence="1">
    <location>
        <begin position="372"/>
        <end position="373"/>
    </location>
    <ligand>
        <name>NAD(+)</name>
        <dbReference type="ChEBI" id="CHEBI:57540"/>
    </ligand>
</feature>
<feature type="binding site" evidence="1">
    <location>
        <position position="397"/>
    </location>
    <ligand>
        <name>UDP-alpha-D-glucuronate</name>
        <dbReference type="ChEBI" id="CHEBI:58052"/>
    </ligand>
</feature>
<feature type="binding site" evidence="1">
    <location>
        <position position="402"/>
    </location>
    <ligand>
        <name>UDP-alpha-D-glucuronate</name>
        <dbReference type="ChEBI" id="CHEBI:58052"/>
    </ligand>
</feature>
<feature type="binding site" evidence="1">
    <location>
        <begin position="436"/>
        <end position="437"/>
    </location>
    <ligand>
        <name>UDP-alpha-D-glucuronate</name>
        <dbReference type="ChEBI" id="CHEBI:58052"/>
    </ligand>
</feature>
<feature type="binding site" evidence="1">
    <location>
        <position position="464"/>
    </location>
    <ligand>
        <name>UDP-alpha-D-glucuronate</name>
        <dbReference type="ChEBI" id="CHEBI:58052"/>
    </ligand>
</feature>
<feature type="binding site" evidence="1">
    <location>
        <position position="495"/>
    </location>
    <ligand>
        <name>UDP-alpha-D-glucuronate</name>
        <dbReference type="ChEBI" id="CHEBI:58052"/>
    </ligand>
</feature>
<feature type="binding site" evidence="1">
    <location>
        <begin position="529"/>
        <end position="538"/>
    </location>
    <ligand>
        <name>UDP-alpha-D-glucuronate</name>
        <dbReference type="ChEBI" id="CHEBI:58052"/>
    </ligand>
</feature>
<feature type="binding site" evidence="1">
    <location>
        <position position="616"/>
    </location>
    <ligand>
        <name>UDP-alpha-D-glucuronate</name>
        <dbReference type="ChEBI" id="CHEBI:58052"/>
    </ligand>
</feature>
<feature type="site" description="Transition state stabilizer" evidence="1">
    <location>
        <position position="104"/>
    </location>
</feature>
<feature type="site" description="Raises pKa of active site His" evidence="1">
    <location>
        <position position="142"/>
    </location>
</feature>
<evidence type="ECO:0000255" key="1">
    <source>
        <dbReference type="HAMAP-Rule" id="MF_01166"/>
    </source>
</evidence>
<sequence>MSTKAVVFAYHDIGCVGLQALLDAGYEIAAVFTHADDPREKTFFGSVAQLCARHGIAVHAPEDPNHPLWVERIGKLAPDFIFSFYYRQLLGDSLLACAKKAALNLHGSLLPRYRGRAPANWVLVNGESETGVTLHQMVKRADAGPIVAQQRVSISATDTALTLHGKLRDAAADLLCETLPLLAAQGQLPATPQDESRATYFGRRTPADGLIDWSLPATQLYNLIRAVTQPYPGAFCPVGDNKLIVWAASVDTSSNGEAPGTVISHEPLRIACGEGSLVITAGQRGDNGLYLSGEQLAREFGLVAGSQMLDKAKRRSVRRTRVLILGVNGFIGNHLSERLLQDDRYEIYGMDIGSDAIERLRAKPNFHFIEGDISIHTEWIEYHIKKCDVVLPLVAIATPIEYTRNPLRVFELDFEENLKIVRYCVKYNKRVIFPSTSEVYGMCQDANFNEDTSNLIVGPINKQRWIYSVSKQLLDRVIWAYGQKGLQFTLFRPFNWMGPRLDRLDSARIGSSRAITQLILHLVEGTPIRLVDGGAQKRCFTDVVDGIEALARIIENRDGRCNGQIINIGNPDNEASIRQLGEELLRQFEAHPLRGHFPPFAGFREVESQSFYGKGYQDVSHRTPSIDNAKKLIGWTPGIELSETIGKTLDFFLREAMAEKADQC</sequence>
<organism>
    <name type="scientific">Pseudomonas syringae pv. syringae (strain B728a)</name>
    <dbReference type="NCBI Taxonomy" id="205918"/>
    <lineage>
        <taxon>Bacteria</taxon>
        <taxon>Pseudomonadati</taxon>
        <taxon>Pseudomonadota</taxon>
        <taxon>Gammaproteobacteria</taxon>
        <taxon>Pseudomonadales</taxon>
        <taxon>Pseudomonadaceae</taxon>
        <taxon>Pseudomonas</taxon>
        <taxon>Pseudomonas syringae</taxon>
    </lineage>
</organism>
<dbReference type="EC" id="2.1.2.13" evidence="1"/>
<dbReference type="EC" id="1.1.1.305" evidence="1"/>
<dbReference type="EMBL" id="CP000075">
    <property type="protein sequence ID" value="AAY37730.1"/>
    <property type="molecule type" value="Genomic_DNA"/>
</dbReference>
<dbReference type="RefSeq" id="WP_011267892.1">
    <property type="nucleotide sequence ID" value="NC_007005.1"/>
</dbReference>
<dbReference type="RefSeq" id="YP_235768.1">
    <property type="nucleotide sequence ID" value="NC_007005.1"/>
</dbReference>
<dbReference type="SMR" id="Q4ZSZ2"/>
<dbReference type="STRING" id="205918.Psyr_2691"/>
<dbReference type="KEGG" id="psb:Psyr_2691"/>
<dbReference type="PATRIC" id="fig|205918.7.peg.2751"/>
<dbReference type="eggNOG" id="COG0223">
    <property type="taxonomic scope" value="Bacteria"/>
</dbReference>
<dbReference type="eggNOG" id="COG0451">
    <property type="taxonomic scope" value="Bacteria"/>
</dbReference>
<dbReference type="HOGENOM" id="CLU_007383_23_0_6"/>
<dbReference type="OrthoDB" id="9802815at2"/>
<dbReference type="UniPathway" id="UPA00030"/>
<dbReference type="UniPathway" id="UPA00032">
    <property type="reaction ID" value="UER00492"/>
</dbReference>
<dbReference type="UniPathway" id="UPA00032">
    <property type="reaction ID" value="UER00494"/>
</dbReference>
<dbReference type="Proteomes" id="UP000000426">
    <property type="component" value="Chromosome"/>
</dbReference>
<dbReference type="GO" id="GO:0016020">
    <property type="term" value="C:membrane"/>
    <property type="evidence" value="ECO:0007669"/>
    <property type="project" value="GOC"/>
</dbReference>
<dbReference type="GO" id="GO:0016831">
    <property type="term" value="F:carboxy-lyase activity"/>
    <property type="evidence" value="ECO:0007669"/>
    <property type="project" value="InterPro"/>
</dbReference>
<dbReference type="GO" id="GO:0099619">
    <property type="term" value="F:UDP-4-amino-4-deoxy-L-arabinose formyltransferase activity"/>
    <property type="evidence" value="ECO:0007669"/>
    <property type="project" value="UniProtKB-EC"/>
</dbReference>
<dbReference type="GO" id="GO:0099618">
    <property type="term" value="F:UDP-glucuronate dehydrogenase activity"/>
    <property type="evidence" value="ECO:0007669"/>
    <property type="project" value="UniProtKB-EC"/>
</dbReference>
<dbReference type="GO" id="GO:0009245">
    <property type="term" value="P:lipid A biosynthetic process"/>
    <property type="evidence" value="ECO:0007669"/>
    <property type="project" value="UniProtKB-KW"/>
</dbReference>
<dbReference type="GO" id="GO:0009103">
    <property type="term" value="P:lipopolysaccharide biosynthetic process"/>
    <property type="evidence" value="ECO:0007669"/>
    <property type="project" value="UniProtKB-UniRule"/>
</dbReference>
<dbReference type="GO" id="GO:0046677">
    <property type="term" value="P:response to antibiotic"/>
    <property type="evidence" value="ECO:0007669"/>
    <property type="project" value="UniProtKB-KW"/>
</dbReference>
<dbReference type="CDD" id="cd08702">
    <property type="entry name" value="Arna_FMT_C"/>
    <property type="match status" value="1"/>
</dbReference>
<dbReference type="CDD" id="cd05257">
    <property type="entry name" value="Arna_like_SDR_e"/>
    <property type="match status" value="1"/>
</dbReference>
<dbReference type="FunFam" id="3.40.50.720:FF:000197">
    <property type="entry name" value="Bifunctional polymyxin resistance protein ArnA"/>
    <property type="match status" value="1"/>
</dbReference>
<dbReference type="Gene3D" id="3.40.50.12230">
    <property type="match status" value="1"/>
</dbReference>
<dbReference type="Gene3D" id="3.40.50.720">
    <property type="entry name" value="NAD(P)-binding Rossmann-like Domain"/>
    <property type="match status" value="1"/>
</dbReference>
<dbReference type="HAMAP" id="MF_01166">
    <property type="entry name" value="ArnA"/>
    <property type="match status" value="1"/>
</dbReference>
<dbReference type="InterPro" id="IPR045869">
    <property type="entry name" value="Arna-like_SDR_e"/>
</dbReference>
<dbReference type="InterPro" id="IPR021168">
    <property type="entry name" value="Bifun_polymyxin_resist_ArnA"/>
</dbReference>
<dbReference type="InterPro" id="IPR001509">
    <property type="entry name" value="Epimerase_deHydtase"/>
</dbReference>
<dbReference type="InterPro" id="IPR005793">
    <property type="entry name" value="Formyl_trans_C"/>
</dbReference>
<dbReference type="InterPro" id="IPR002376">
    <property type="entry name" value="Formyl_transf_N"/>
</dbReference>
<dbReference type="InterPro" id="IPR036477">
    <property type="entry name" value="Formyl_transf_N_sf"/>
</dbReference>
<dbReference type="InterPro" id="IPR011034">
    <property type="entry name" value="Formyl_transferase-like_C_sf"/>
</dbReference>
<dbReference type="InterPro" id="IPR050177">
    <property type="entry name" value="Lipid_A_modif_metabolic_enz"/>
</dbReference>
<dbReference type="InterPro" id="IPR036291">
    <property type="entry name" value="NAD(P)-bd_dom_sf"/>
</dbReference>
<dbReference type="NCBIfam" id="NF005414">
    <property type="entry name" value="PRK06988.1"/>
    <property type="match status" value="1"/>
</dbReference>
<dbReference type="NCBIfam" id="NF005998">
    <property type="entry name" value="PRK08125.1"/>
    <property type="match status" value="1"/>
</dbReference>
<dbReference type="NCBIfam" id="NF008872">
    <property type="entry name" value="PRK11908.1"/>
    <property type="match status" value="1"/>
</dbReference>
<dbReference type="PANTHER" id="PTHR43245">
    <property type="entry name" value="BIFUNCTIONAL POLYMYXIN RESISTANCE PROTEIN ARNA"/>
    <property type="match status" value="1"/>
</dbReference>
<dbReference type="PANTHER" id="PTHR43245:SF13">
    <property type="entry name" value="UDP-D-APIOSE_UDP-D-XYLOSE SYNTHASE 2"/>
    <property type="match status" value="1"/>
</dbReference>
<dbReference type="Pfam" id="PF01370">
    <property type="entry name" value="Epimerase"/>
    <property type="match status" value="1"/>
</dbReference>
<dbReference type="Pfam" id="PF02911">
    <property type="entry name" value="Formyl_trans_C"/>
    <property type="match status" value="1"/>
</dbReference>
<dbReference type="Pfam" id="PF00551">
    <property type="entry name" value="Formyl_trans_N"/>
    <property type="match status" value="1"/>
</dbReference>
<dbReference type="PIRSF" id="PIRSF036506">
    <property type="entry name" value="Bifun_polymyxin_resist_ArnA"/>
    <property type="match status" value="1"/>
</dbReference>
<dbReference type="SUPFAM" id="SSF50486">
    <property type="entry name" value="FMT C-terminal domain-like"/>
    <property type="match status" value="1"/>
</dbReference>
<dbReference type="SUPFAM" id="SSF53328">
    <property type="entry name" value="Formyltransferase"/>
    <property type="match status" value="1"/>
</dbReference>
<dbReference type="SUPFAM" id="SSF51735">
    <property type="entry name" value="NAD(P)-binding Rossmann-fold domains"/>
    <property type="match status" value="1"/>
</dbReference>
<protein>
    <recommendedName>
        <fullName evidence="1">Bifunctional polymyxin resistance protein ArnA</fullName>
    </recommendedName>
    <domain>
        <recommendedName>
            <fullName evidence="1">UDP-4-amino-4-deoxy-L-arabinose formyltransferase</fullName>
            <ecNumber evidence="1">2.1.2.13</ecNumber>
        </recommendedName>
        <alternativeName>
            <fullName evidence="1">ArnAFT</fullName>
        </alternativeName>
        <alternativeName>
            <fullName evidence="1">UDP-L-Ara4N formyltransferase</fullName>
        </alternativeName>
    </domain>
    <domain>
        <recommendedName>
            <fullName evidence="1">UDP-glucuronic acid oxidase, UDP-4-keto-hexauronic acid decarboxylating</fullName>
            <ecNumber evidence="1">1.1.1.305</ecNumber>
        </recommendedName>
        <alternativeName>
            <fullName evidence="1">ArnADH</fullName>
        </alternativeName>
        <alternativeName>
            <fullName evidence="1">UDP-GlcUA decarboxylase</fullName>
        </alternativeName>
        <alternativeName>
            <fullName evidence="1">UDP-glucuronic acid dehydrogenase</fullName>
        </alternativeName>
    </domain>
</protein>
<keyword id="KW-0046">Antibiotic resistance</keyword>
<keyword id="KW-0441">Lipid A biosynthesis</keyword>
<keyword id="KW-0444">Lipid biosynthesis</keyword>
<keyword id="KW-0443">Lipid metabolism</keyword>
<keyword id="KW-0448">Lipopolysaccharide biosynthesis</keyword>
<keyword id="KW-0511">Multifunctional enzyme</keyword>
<keyword id="KW-0520">NAD</keyword>
<keyword id="KW-0560">Oxidoreductase</keyword>
<keyword id="KW-0808">Transferase</keyword>
<comment type="function">
    <text evidence="1">Bifunctional enzyme that catalyzes the oxidative decarboxylation of UDP-glucuronic acid (UDP-GlcUA) to UDP-4-keto-arabinose (UDP-Ara4O) and the addition of a formyl group to UDP-4-amino-4-deoxy-L-arabinose (UDP-L-Ara4N) to form UDP-L-4-formamido-arabinose (UDP-L-Ara4FN). The modified arabinose is attached to lipid A and is required for resistance to polymyxin and cationic antimicrobial peptides.</text>
</comment>
<comment type="catalytic activity">
    <reaction evidence="1">
        <text>UDP-alpha-D-glucuronate + NAD(+) = UDP-beta-L-threo-pentopyranos-4-ulose + CO2 + NADH</text>
        <dbReference type="Rhea" id="RHEA:24702"/>
        <dbReference type="ChEBI" id="CHEBI:16526"/>
        <dbReference type="ChEBI" id="CHEBI:57540"/>
        <dbReference type="ChEBI" id="CHEBI:57945"/>
        <dbReference type="ChEBI" id="CHEBI:58052"/>
        <dbReference type="ChEBI" id="CHEBI:58710"/>
        <dbReference type="EC" id="1.1.1.305"/>
    </reaction>
</comment>
<comment type="catalytic activity">
    <reaction evidence="1">
        <text>UDP-4-amino-4-deoxy-beta-L-arabinose + (6R)-10-formyltetrahydrofolate = UDP-4-deoxy-4-formamido-beta-L-arabinose + (6S)-5,6,7,8-tetrahydrofolate + H(+)</text>
        <dbReference type="Rhea" id="RHEA:24706"/>
        <dbReference type="ChEBI" id="CHEBI:15378"/>
        <dbReference type="ChEBI" id="CHEBI:57453"/>
        <dbReference type="ChEBI" id="CHEBI:58708"/>
        <dbReference type="ChEBI" id="CHEBI:58709"/>
        <dbReference type="ChEBI" id="CHEBI:195366"/>
        <dbReference type="EC" id="2.1.2.13"/>
    </reaction>
</comment>
<comment type="pathway">
    <text evidence="1">Nucleotide-sugar biosynthesis; UDP-4-deoxy-4-formamido-beta-L-arabinose biosynthesis; UDP-4-deoxy-4-formamido-beta-L-arabinose from UDP-alpha-D-glucuronate: step 1/3.</text>
</comment>
<comment type="pathway">
    <text evidence="1">Nucleotide-sugar biosynthesis; UDP-4-deoxy-4-formamido-beta-L-arabinose biosynthesis; UDP-4-deoxy-4-formamido-beta-L-arabinose from UDP-alpha-D-glucuronate: step 3/3.</text>
</comment>
<comment type="pathway">
    <text evidence="1">Bacterial outer membrane biogenesis; lipopolysaccharide biosynthesis.</text>
</comment>
<comment type="subunit">
    <text evidence="1">Homohexamer, formed by a dimer of trimers.</text>
</comment>
<comment type="similarity">
    <text evidence="1">In the N-terminal section; belongs to the Fmt family. UDP-L-Ara4N formyltransferase subfamily.</text>
</comment>
<comment type="similarity">
    <text evidence="1">In the C-terminal section; belongs to the NAD(P)-dependent epimerase/dehydratase family. UDP-glucuronic acid decarboxylase subfamily.</text>
</comment>
<reference key="1">
    <citation type="journal article" date="2005" name="Proc. Natl. Acad. Sci. U.S.A.">
        <title>Comparison of the complete genome sequences of Pseudomonas syringae pv. syringae B728a and pv. tomato DC3000.</title>
        <authorList>
            <person name="Feil H."/>
            <person name="Feil W.S."/>
            <person name="Chain P."/>
            <person name="Larimer F."/>
            <person name="Dibartolo G."/>
            <person name="Copeland A."/>
            <person name="Lykidis A."/>
            <person name="Trong S."/>
            <person name="Nolan M."/>
            <person name="Goltsman E."/>
            <person name="Thiel J."/>
            <person name="Malfatti S."/>
            <person name="Loper J.E."/>
            <person name="Lapidus A."/>
            <person name="Detter J.C."/>
            <person name="Land M."/>
            <person name="Richardson P.M."/>
            <person name="Kyrpides N.C."/>
            <person name="Ivanova N."/>
            <person name="Lindow S.E."/>
        </authorList>
    </citation>
    <scope>NUCLEOTIDE SEQUENCE [LARGE SCALE GENOMIC DNA]</scope>
    <source>
        <strain>B728a</strain>
    </source>
</reference>
<name>ARNA_PSEU2</name>